<sequence length="413" mass="45099">MTLFISDSIFSSTEKKGVDFDKAFAGYIVVENGLIQKVGKGDAPESLKSQAEKIIDARGKTITAGLVDAHTHLVHGGSREHELAMKLAGKTYLEIHASGGGIFSTVRATRAASKEELTQKALTSLDRMLIHGTTTAESKSGYGLDMETEIKCLEINSYLNKNHPIDIVSTYMGAHATPPEFKDNKEGYIKFMIEEVMPEVKKRGLAEFSDAFCEDKIFSVEETERIMKAAADLGFKLKLHADEIIPLKGAELAAKMNAHSAEHLMAISDEGITALAKSGTVAVLLPATSFFLMSPIYAPAKKMIEEGVRVALATDYNPGSSPTENLQMAMWAACYKMKLLPAQILRGVTINAAYAIDREKTIGSIEEGKQADLVIFDAPNIDFLVYHFGVNSVDQVWKKGKLVAEKGRLVYKN</sequence>
<dbReference type="EC" id="3.5.2.7" evidence="1"/>
<dbReference type="EMBL" id="AE017226">
    <property type="protein sequence ID" value="AAS10545.1"/>
    <property type="molecule type" value="Genomic_DNA"/>
</dbReference>
<dbReference type="RefSeq" id="NP_970664.1">
    <property type="nucleotide sequence ID" value="NC_002967.9"/>
</dbReference>
<dbReference type="RefSeq" id="WP_002673322.1">
    <property type="nucleotide sequence ID" value="NC_002967.9"/>
</dbReference>
<dbReference type="SMR" id="Q73RN8"/>
<dbReference type="STRING" id="243275.TDE_0047"/>
<dbReference type="PaxDb" id="243275-TDE_0047"/>
<dbReference type="GeneID" id="2741662"/>
<dbReference type="KEGG" id="tde:TDE_0047"/>
<dbReference type="PATRIC" id="fig|243275.7.peg.49"/>
<dbReference type="eggNOG" id="COG1228">
    <property type="taxonomic scope" value="Bacteria"/>
</dbReference>
<dbReference type="HOGENOM" id="CLU_041647_0_1_12"/>
<dbReference type="OrthoDB" id="9767366at2"/>
<dbReference type="UniPathway" id="UPA00379">
    <property type="reaction ID" value="UER00551"/>
</dbReference>
<dbReference type="Proteomes" id="UP000008212">
    <property type="component" value="Chromosome"/>
</dbReference>
<dbReference type="GO" id="GO:0005737">
    <property type="term" value="C:cytoplasm"/>
    <property type="evidence" value="ECO:0007669"/>
    <property type="project" value="UniProtKB-SubCell"/>
</dbReference>
<dbReference type="GO" id="GO:0050480">
    <property type="term" value="F:imidazolonepropionase activity"/>
    <property type="evidence" value="ECO:0007669"/>
    <property type="project" value="UniProtKB-UniRule"/>
</dbReference>
<dbReference type="GO" id="GO:0005506">
    <property type="term" value="F:iron ion binding"/>
    <property type="evidence" value="ECO:0007669"/>
    <property type="project" value="UniProtKB-UniRule"/>
</dbReference>
<dbReference type="GO" id="GO:0008270">
    <property type="term" value="F:zinc ion binding"/>
    <property type="evidence" value="ECO:0007669"/>
    <property type="project" value="UniProtKB-UniRule"/>
</dbReference>
<dbReference type="GO" id="GO:0019556">
    <property type="term" value="P:L-histidine catabolic process to glutamate and formamide"/>
    <property type="evidence" value="ECO:0007669"/>
    <property type="project" value="UniProtKB-UniPathway"/>
</dbReference>
<dbReference type="GO" id="GO:0019557">
    <property type="term" value="P:L-histidine catabolic process to glutamate and formate"/>
    <property type="evidence" value="ECO:0007669"/>
    <property type="project" value="UniProtKB-UniPathway"/>
</dbReference>
<dbReference type="CDD" id="cd01296">
    <property type="entry name" value="Imidazolone-5PH"/>
    <property type="match status" value="1"/>
</dbReference>
<dbReference type="FunFam" id="3.20.20.140:FF:000007">
    <property type="entry name" value="Imidazolonepropionase"/>
    <property type="match status" value="1"/>
</dbReference>
<dbReference type="Gene3D" id="3.20.20.140">
    <property type="entry name" value="Metal-dependent hydrolases"/>
    <property type="match status" value="1"/>
</dbReference>
<dbReference type="Gene3D" id="2.30.40.10">
    <property type="entry name" value="Urease, subunit C, domain 1"/>
    <property type="match status" value="1"/>
</dbReference>
<dbReference type="HAMAP" id="MF_00372">
    <property type="entry name" value="HutI"/>
    <property type="match status" value="1"/>
</dbReference>
<dbReference type="InterPro" id="IPR006680">
    <property type="entry name" value="Amidohydro-rel"/>
</dbReference>
<dbReference type="InterPro" id="IPR005920">
    <property type="entry name" value="HutI"/>
</dbReference>
<dbReference type="InterPro" id="IPR011059">
    <property type="entry name" value="Metal-dep_hydrolase_composite"/>
</dbReference>
<dbReference type="InterPro" id="IPR032466">
    <property type="entry name" value="Metal_Hydrolase"/>
</dbReference>
<dbReference type="NCBIfam" id="TIGR01224">
    <property type="entry name" value="hutI"/>
    <property type="match status" value="1"/>
</dbReference>
<dbReference type="PANTHER" id="PTHR42752">
    <property type="entry name" value="IMIDAZOLONEPROPIONASE"/>
    <property type="match status" value="1"/>
</dbReference>
<dbReference type="PANTHER" id="PTHR42752:SF1">
    <property type="entry name" value="IMIDAZOLONEPROPIONASE-RELATED"/>
    <property type="match status" value="1"/>
</dbReference>
<dbReference type="Pfam" id="PF01979">
    <property type="entry name" value="Amidohydro_1"/>
    <property type="match status" value="1"/>
</dbReference>
<dbReference type="SUPFAM" id="SSF51338">
    <property type="entry name" value="Composite domain of metallo-dependent hydrolases"/>
    <property type="match status" value="1"/>
</dbReference>
<dbReference type="SUPFAM" id="SSF51556">
    <property type="entry name" value="Metallo-dependent hydrolases"/>
    <property type="match status" value="1"/>
</dbReference>
<keyword id="KW-0963">Cytoplasm</keyword>
<keyword id="KW-0369">Histidine metabolism</keyword>
<keyword id="KW-0378">Hydrolase</keyword>
<keyword id="KW-0408">Iron</keyword>
<keyword id="KW-0479">Metal-binding</keyword>
<keyword id="KW-1185">Reference proteome</keyword>
<keyword id="KW-0862">Zinc</keyword>
<gene>
    <name evidence="1" type="primary">hutI</name>
    <name type="ordered locus">TDE_0047</name>
</gene>
<accession>Q73RN8</accession>
<protein>
    <recommendedName>
        <fullName evidence="1">Imidazolonepropionase</fullName>
        <ecNumber evidence="1">3.5.2.7</ecNumber>
    </recommendedName>
    <alternativeName>
        <fullName evidence="1">Imidazolone-5-propionate hydrolase</fullName>
    </alternativeName>
</protein>
<comment type="function">
    <text evidence="1">Catalyzes the hydrolytic cleavage of the carbon-nitrogen bond in imidazolone-5-propanoate to yield N-formimidoyl-L-glutamate. It is the third step in the universal histidine degradation pathway.</text>
</comment>
<comment type="catalytic activity">
    <reaction evidence="1">
        <text>4-imidazolone-5-propanoate + H2O = N-formimidoyl-L-glutamate</text>
        <dbReference type="Rhea" id="RHEA:23660"/>
        <dbReference type="ChEBI" id="CHEBI:15377"/>
        <dbReference type="ChEBI" id="CHEBI:58928"/>
        <dbReference type="ChEBI" id="CHEBI:77893"/>
        <dbReference type="EC" id="3.5.2.7"/>
    </reaction>
</comment>
<comment type="cofactor">
    <cofactor evidence="1">
        <name>Zn(2+)</name>
        <dbReference type="ChEBI" id="CHEBI:29105"/>
    </cofactor>
    <cofactor evidence="1">
        <name>Fe(3+)</name>
        <dbReference type="ChEBI" id="CHEBI:29034"/>
    </cofactor>
    <text evidence="1">Binds 1 zinc or iron ion per subunit.</text>
</comment>
<comment type="pathway">
    <text evidence="1">Amino-acid degradation; L-histidine degradation into L-glutamate; N-formimidoyl-L-glutamate from L-histidine: step 3/3.</text>
</comment>
<comment type="subcellular location">
    <subcellularLocation>
        <location evidence="1">Cytoplasm</location>
    </subcellularLocation>
</comment>
<comment type="similarity">
    <text evidence="1">Belongs to the metallo-dependent hydrolases superfamily. HutI family.</text>
</comment>
<organism>
    <name type="scientific">Treponema denticola (strain ATCC 35405 / DSM 14222 / CIP 103919 / JCM 8153 / KCTC 15104)</name>
    <dbReference type="NCBI Taxonomy" id="243275"/>
    <lineage>
        <taxon>Bacteria</taxon>
        <taxon>Pseudomonadati</taxon>
        <taxon>Spirochaetota</taxon>
        <taxon>Spirochaetia</taxon>
        <taxon>Spirochaetales</taxon>
        <taxon>Treponemataceae</taxon>
        <taxon>Treponema</taxon>
    </lineage>
</organism>
<feature type="chain" id="PRO_0000455446" description="Imidazolonepropionase">
    <location>
        <begin position="1"/>
        <end position="413"/>
    </location>
</feature>
<feature type="binding site" evidence="1">
    <location>
        <position position="70"/>
    </location>
    <ligand>
        <name>Fe(3+)</name>
        <dbReference type="ChEBI" id="CHEBI:29034"/>
    </ligand>
</feature>
<feature type="binding site" evidence="1">
    <location>
        <position position="70"/>
    </location>
    <ligand>
        <name>Zn(2+)</name>
        <dbReference type="ChEBI" id="CHEBI:29105"/>
    </ligand>
</feature>
<feature type="binding site" evidence="1">
    <location>
        <position position="72"/>
    </location>
    <ligand>
        <name>Fe(3+)</name>
        <dbReference type="ChEBI" id="CHEBI:29034"/>
    </ligand>
</feature>
<feature type="binding site" evidence="1">
    <location>
        <position position="72"/>
    </location>
    <ligand>
        <name>Zn(2+)</name>
        <dbReference type="ChEBI" id="CHEBI:29105"/>
    </ligand>
</feature>
<feature type="binding site" evidence="1">
    <location>
        <position position="79"/>
    </location>
    <ligand>
        <name>4-imidazolone-5-propanoate</name>
        <dbReference type="ChEBI" id="CHEBI:77893"/>
    </ligand>
</feature>
<feature type="binding site" evidence="1">
    <location>
        <position position="142"/>
    </location>
    <ligand>
        <name>4-imidazolone-5-propanoate</name>
        <dbReference type="ChEBI" id="CHEBI:77893"/>
    </ligand>
</feature>
<feature type="binding site" evidence="1">
    <location>
        <position position="142"/>
    </location>
    <ligand>
        <name>N-formimidoyl-L-glutamate</name>
        <dbReference type="ChEBI" id="CHEBI:58928"/>
    </ligand>
</feature>
<feature type="binding site" evidence="1">
    <location>
        <position position="175"/>
    </location>
    <ligand>
        <name>4-imidazolone-5-propanoate</name>
        <dbReference type="ChEBI" id="CHEBI:77893"/>
    </ligand>
</feature>
<feature type="binding site" evidence="1">
    <location>
        <position position="240"/>
    </location>
    <ligand>
        <name>Fe(3+)</name>
        <dbReference type="ChEBI" id="CHEBI:29034"/>
    </ligand>
</feature>
<feature type="binding site" evidence="1">
    <location>
        <position position="240"/>
    </location>
    <ligand>
        <name>Zn(2+)</name>
        <dbReference type="ChEBI" id="CHEBI:29105"/>
    </ligand>
</feature>
<feature type="binding site" evidence="1">
    <location>
        <position position="243"/>
    </location>
    <ligand>
        <name>4-imidazolone-5-propanoate</name>
        <dbReference type="ChEBI" id="CHEBI:77893"/>
    </ligand>
</feature>
<feature type="binding site" evidence="1">
    <location>
        <position position="315"/>
    </location>
    <ligand>
        <name>Fe(3+)</name>
        <dbReference type="ChEBI" id="CHEBI:29034"/>
    </ligand>
</feature>
<feature type="binding site" evidence="1">
    <location>
        <position position="315"/>
    </location>
    <ligand>
        <name>Zn(2+)</name>
        <dbReference type="ChEBI" id="CHEBI:29105"/>
    </ligand>
</feature>
<feature type="binding site" evidence="1">
    <location>
        <position position="317"/>
    </location>
    <ligand>
        <name>N-formimidoyl-L-glutamate</name>
        <dbReference type="ChEBI" id="CHEBI:58928"/>
    </ligand>
</feature>
<feature type="binding site" evidence="1">
    <location>
        <position position="319"/>
    </location>
    <ligand>
        <name>N-formimidoyl-L-glutamate</name>
        <dbReference type="ChEBI" id="CHEBI:58928"/>
    </ligand>
</feature>
<feature type="binding site" evidence="1">
    <location>
        <position position="320"/>
    </location>
    <ligand>
        <name>4-imidazolone-5-propanoate</name>
        <dbReference type="ChEBI" id="CHEBI:77893"/>
    </ligand>
</feature>
<evidence type="ECO:0000255" key="1">
    <source>
        <dbReference type="HAMAP-Rule" id="MF_00372"/>
    </source>
</evidence>
<reference key="1">
    <citation type="journal article" date="2004" name="Proc. Natl. Acad. Sci. U.S.A.">
        <title>Comparison of the genome of the oral pathogen Treponema denticola with other spirochete genomes.</title>
        <authorList>
            <person name="Seshadri R."/>
            <person name="Myers G.S.A."/>
            <person name="Tettelin H."/>
            <person name="Eisen J.A."/>
            <person name="Heidelberg J.F."/>
            <person name="Dodson R.J."/>
            <person name="Davidsen T.M."/>
            <person name="DeBoy R.T."/>
            <person name="Fouts D.E."/>
            <person name="Haft D.H."/>
            <person name="Selengut J."/>
            <person name="Ren Q."/>
            <person name="Brinkac L.M."/>
            <person name="Madupu R."/>
            <person name="Kolonay J.F."/>
            <person name="Durkin S.A."/>
            <person name="Daugherty S.C."/>
            <person name="Shetty J."/>
            <person name="Shvartsbeyn A."/>
            <person name="Gebregeorgis E."/>
            <person name="Geer K."/>
            <person name="Tsegaye G."/>
            <person name="Malek J.A."/>
            <person name="Ayodeji B."/>
            <person name="Shatsman S."/>
            <person name="McLeod M.P."/>
            <person name="Smajs D."/>
            <person name="Howell J.K."/>
            <person name="Pal S."/>
            <person name="Amin A."/>
            <person name="Vashisth P."/>
            <person name="McNeill T.Z."/>
            <person name="Xiang Q."/>
            <person name="Sodergren E."/>
            <person name="Baca E."/>
            <person name="Weinstock G.M."/>
            <person name="Norris S.J."/>
            <person name="Fraser C.M."/>
            <person name="Paulsen I.T."/>
        </authorList>
    </citation>
    <scope>NUCLEOTIDE SEQUENCE [LARGE SCALE GENOMIC DNA]</scope>
    <source>
        <strain>ATCC 35405 / DSM 14222 / CIP 103919 / JCM 8153 / KCTC 15104</strain>
    </source>
</reference>
<name>HUTI_TREDE</name>
<proteinExistence type="inferred from homology"/>